<sequence length="471" mass="53287">MKIKTRFAPSPTGYLHVGGARTALYSWLFARNHGGEFVLRIEDTDLERSTPEAIEAIMDGMNWLNLEWDEGPYFQTKRFDRYNAVIDDMIVAGTAYKCYCSKERLDALREEQMANGDKPRYDGRCRHSHEHHADDEPCVVRFANPQDGSVIFDDQIRGPIEFSNQELDDLIIRRTDGSPTYNFCVVVDDWDMEISHVIRGEDHINNTPRQINILKALNAPVPVYAHVSMINGDDGKKLSKRHGAVSVMQYRDDGYLPEALLNYLVRLGWSSGDQEIFSREEMIKLFSLGAVSKSASAFNTDKLLWLNHHYINTMQPEYVATYLQWHIEQANIDTRTGPELAELVKLLGERCKTLKEIAESCRYFYEEFDAFDADAAKKHLRPVARQPLEVVRDKLAAITAWTAENVHHAIQATADELEVGMGKVGMPLRVAVTGAGQSPGLDVTVHAIGKTRSVARINKALGFIAERESQQ</sequence>
<accession>A4WD15</accession>
<dbReference type="EC" id="6.1.1.17" evidence="1"/>
<dbReference type="EMBL" id="CP000653">
    <property type="protein sequence ID" value="ABP61595.1"/>
    <property type="molecule type" value="Genomic_DNA"/>
</dbReference>
<dbReference type="RefSeq" id="WP_015959928.1">
    <property type="nucleotide sequence ID" value="NC_009436.1"/>
</dbReference>
<dbReference type="SMR" id="A4WD15"/>
<dbReference type="STRING" id="399742.Ent638_2931"/>
<dbReference type="KEGG" id="ent:Ent638_2931"/>
<dbReference type="eggNOG" id="COG0008">
    <property type="taxonomic scope" value="Bacteria"/>
</dbReference>
<dbReference type="HOGENOM" id="CLU_015768_6_0_6"/>
<dbReference type="OrthoDB" id="9807503at2"/>
<dbReference type="Proteomes" id="UP000000230">
    <property type="component" value="Chromosome"/>
</dbReference>
<dbReference type="GO" id="GO:0005829">
    <property type="term" value="C:cytosol"/>
    <property type="evidence" value="ECO:0007669"/>
    <property type="project" value="TreeGrafter"/>
</dbReference>
<dbReference type="GO" id="GO:0005524">
    <property type="term" value="F:ATP binding"/>
    <property type="evidence" value="ECO:0007669"/>
    <property type="project" value="UniProtKB-UniRule"/>
</dbReference>
<dbReference type="GO" id="GO:0004818">
    <property type="term" value="F:glutamate-tRNA ligase activity"/>
    <property type="evidence" value="ECO:0007669"/>
    <property type="project" value="UniProtKB-UniRule"/>
</dbReference>
<dbReference type="GO" id="GO:0000049">
    <property type="term" value="F:tRNA binding"/>
    <property type="evidence" value="ECO:0007669"/>
    <property type="project" value="InterPro"/>
</dbReference>
<dbReference type="GO" id="GO:0008270">
    <property type="term" value="F:zinc ion binding"/>
    <property type="evidence" value="ECO:0007669"/>
    <property type="project" value="UniProtKB-UniRule"/>
</dbReference>
<dbReference type="GO" id="GO:0006424">
    <property type="term" value="P:glutamyl-tRNA aminoacylation"/>
    <property type="evidence" value="ECO:0007669"/>
    <property type="project" value="UniProtKB-UniRule"/>
</dbReference>
<dbReference type="CDD" id="cd00808">
    <property type="entry name" value="GluRS_core"/>
    <property type="match status" value="1"/>
</dbReference>
<dbReference type="FunFam" id="1.10.10.350:FF:000001">
    <property type="entry name" value="Glutamate--tRNA ligase"/>
    <property type="match status" value="1"/>
</dbReference>
<dbReference type="FunFam" id="3.40.50.620:FF:000007">
    <property type="entry name" value="Glutamate--tRNA ligase"/>
    <property type="match status" value="1"/>
</dbReference>
<dbReference type="Gene3D" id="1.10.10.350">
    <property type="match status" value="1"/>
</dbReference>
<dbReference type="Gene3D" id="3.40.50.620">
    <property type="entry name" value="HUPs"/>
    <property type="match status" value="1"/>
</dbReference>
<dbReference type="HAMAP" id="MF_00022">
    <property type="entry name" value="Glu_tRNA_synth_type1"/>
    <property type="match status" value="1"/>
</dbReference>
<dbReference type="InterPro" id="IPR045462">
    <property type="entry name" value="aa-tRNA-synth_I_cd-bd"/>
</dbReference>
<dbReference type="InterPro" id="IPR020751">
    <property type="entry name" value="aa-tRNA-synth_I_codon-bd_sub2"/>
</dbReference>
<dbReference type="InterPro" id="IPR001412">
    <property type="entry name" value="aa-tRNA-synth_I_CS"/>
</dbReference>
<dbReference type="InterPro" id="IPR008925">
    <property type="entry name" value="aa_tRNA-synth_I_cd-bd_sf"/>
</dbReference>
<dbReference type="InterPro" id="IPR004527">
    <property type="entry name" value="Glu-tRNA-ligase_bac/mito"/>
</dbReference>
<dbReference type="InterPro" id="IPR000924">
    <property type="entry name" value="Glu/Gln-tRNA-synth"/>
</dbReference>
<dbReference type="InterPro" id="IPR020058">
    <property type="entry name" value="Glu/Gln-tRNA-synth_Ib_cat-dom"/>
</dbReference>
<dbReference type="InterPro" id="IPR049940">
    <property type="entry name" value="GluQ/Sye"/>
</dbReference>
<dbReference type="InterPro" id="IPR033910">
    <property type="entry name" value="GluRS_core"/>
</dbReference>
<dbReference type="InterPro" id="IPR014729">
    <property type="entry name" value="Rossmann-like_a/b/a_fold"/>
</dbReference>
<dbReference type="NCBIfam" id="TIGR00464">
    <property type="entry name" value="gltX_bact"/>
    <property type="match status" value="1"/>
</dbReference>
<dbReference type="PANTHER" id="PTHR43311">
    <property type="entry name" value="GLUTAMATE--TRNA LIGASE"/>
    <property type="match status" value="1"/>
</dbReference>
<dbReference type="PANTHER" id="PTHR43311:SF2">
    <property type="entry name" value="GLUTAMATE--TRNA LIGASE, MITOCHONDRIAL-RELATED"/>
    <property type="match status" value="1"/>
</dbReference>
<dbReference type="Pfam" id="PF19269">
    <property type="entry name" value="Anticodon_2"/>
    <property type="match status" value="1"/>
</dbReference>
<dbReference type="Pfam" id="PF00749">
    <property type="entry name" value="tRNA-synt_1c"/>
    <property type="match status" value="1"/>
</dbReference>
<dbReference type="PRINTS" id="PR00987">
    <property type="entry name" value="TRNASYNTHGLU"/>
</dbReference>
<dbReference type="SUPFAM" id="SSF48163">
    <property type="entry name" value="An anticodon-binding domain of class I aminoacyl-tRNA synthetases"/>
    <property type="match status" value="1"/>
</dbReference>
<dbReference type="SUPFAM" id="SSF52374">
    <property type="entry name" value="Nucleotidylyl transferase"/>
    <property type="match status" value="1"/>
</dbReference>
<dbReference type="PROSITE" id="PS00178">
    <property type="entry name" value="AA_TRNA_LIGASE_I"/>
    <property type="match status" value="1"/>
</dbReference>
<proteinExistence type="inferred from homology"/>
<organism>
    <name type="scientific">Enterobacter sp. (strain 638)</name>
    <dbReference type="NCBI Taxonomy" id="399742"/>
    <lineage>
        <taxon>Bacteria</taxon>
        <taxon>Pseudomonadati</taxon>
        <taxon>Pseudomonadota</taxon>
        <taxon>Gammaproteobacteria</taxon>
        <taxon>Enterobacterales</taxon>
        <taxon>Enterobacteriaceae</taxon>
        <taxon>Enterobacter</taxon>
    </lineage>
</organism>
<keyword id="KW-0030">Aminoacyl-tRNA synthetase</keyword>
<keyword id="KW-0067">ATP-binding</keyword>
<keyword id="KW-0963">Cytoplasm</keyword>
<keyword id="KW-0436">Ligase</keyword>
<keyword id="KW-0479">Metal-binding</keyword>
<keyword id="KW-0547">Nucleotide-binding</keyword>
<keyword id="KW-0648">Protein biosynthesis</keyword>
<keyword id="KW-0862">Zinc</keyword>
<comment type="function">
    <text evidence="1">Catalyzes the attachment of glutamate to tRNA(Glu) in a two-step reaction: glutamate is first activated by ATP to form Glu-AMP and then transferred to the acceptor end of tRNA(Glu).</text>
</comment>
<comment type="catalytic activity">
    <reaction evidence="1">
        <text>tRNA(Glu) + L-glutamate + ATP = L-glutamyl-tRNA(Glu) + AMP + diphosphate</text>
        <dbReference type="Rhea" id="RHEA:23540"/>
        <dbReference type="Rhea" id="RHEA-COMP:9663"/>
        <dbReference type="Rhea" id="RHEA-COMP:9680"/>
        <dbReference type="ChEBI" id="CHEBI:29985"/>
        <dbReference type="ChEBI" id="CHEBI:30616"/>
        <dbReference type="ChEBI" id="CHEBI:33019"/>
        <dbReference type="ChEBI" id="CHEBI:78442"/>
        <dbReference type="ChEBI" id="CHEBI:78520"/>
        <dbReference type="ChEBI" id="CHEBI:456215"/>
        <dbReference type="EC" id="6.1.1.17"/>
    </reaction>
</comment>
<comment type="cofactor">
    <cofactor evidence="1">
        <name>Zn(2+)</name>
        <dbReference type="ChEBI" id="CHEBI:29105"/>
    </cofactor>
    <text evidence="1">Binds 1 zinc ion per subunit.</text>
</comment>
<comment type="subunit">
    <text evidence="1">Monomer.</text>
</comment>
<comment type="subcellular location">
    <subcellularLocation>
        <location evidence="1">Cytoplasm</location>
    </subcellularLocation>
</comment>
<comment type="similarity">
    <text evidence="1">Belongs to the class-I aminoacyl-tRNA synthetase family. Glutamate--tRNA ligase type 1 subfamily.</text>
</comment>
<name>SYE_ENT38</name>
<evidence type="ECO:0000255" key="1">
    <source>
        <dbReference type="HAMAP-Rule" id="MF_00022"/>
    </source>
</evidence>
<feature type="chain" id="PRO_1000057194" description="Glutamate--tRNA ligase">
    <location>
        <begin position="1"/>
        <end position="471"/>
    </location>
</feature>
<feature type="short sequence motif" description="'HIGH' region" evidence="1">
    <location>
        <begin position="9"/>
        <end position="19"/>
    </location>
</feature>
<feature type="short sequence motif" description="'KMSKS' region" evidence="1">
    <location>
        <begin position="237"/>
        <end position="241"/>
    </location>
</feature>
<feature type="binding site" evidence="1">
    <location>
        <position position="98"/>
    </location>
    <ligand>
        <name>Zn(2+)</name>
        <dbReference type="ChEBI" id="CHEBI:29105"/>
    </ligand>
</feature>
<feature type="binding site" evidence="1">
    <location>
        <position position="100"/>
    </location>
    <ligand>
        <name>Zn(2+)</name>
        <dbReference type="ChEBI" id="CHEBI:29105"/>
    </ligand>
</feature>
<feature type="binding site" evidence="1">
    <location>
        <position position="125"/>
    </location>
    <ligand>
        <name>Zn(2+)</name>
        <dbReference type="ChEBI" id="CHEBI:29105"/>
    </ligand>
</feature>
<feature type="binding site" evidence="1">
    <location>
        <position position="127"/>
    </location>
    <ligand>
        <name>Zn(2+)</name>
        <dbReference type="ChEBI" id="CHEBI:29105"/>
    </ligand>
</feature>
<feature type="binding site" evidence="1">
    <location>
        <position position="240"/>
    </location>
    <ligand>
        <name>ATP</name>
        <dbReference type="ChEBI" id="CHEBI:30616"/>
    </ligand>
</feature>
<reference key="1">
    <citation type="journal article" date="2010" name="PLoS Genet.">
        <title>Genome sequence of the plant growth promoting endophytic bacterium Enterobacter sp. 638.</title>
        <authorList>
            <person name="Taghavi S."/>
            <person name="van der Lelie D."/>
            <person name="Hoffman A."/>
            <person name="Zhang Y.B."/>
            <person name="Walla M.D."/>
            <person name="Vangronsveld J."/>
            <person name="Newman L."/>
            <person name="Monchy S."/>
        </authorList>
    </citation>
    <scope>NUCLEOTIDE SEQUENCE [LARGE SCALE GENOMIC DNA]</scope>
    <source>
        <strain>638</strain>
    </source>
</reference>
<gene>
    <name evidence="1" type="primary">gltX</name>
    <name type="ordered locus">Ent638_2931</name>
</gene>
<protein>
    <recommendedName>
        <fullName evidence="1">Glutamate--tRNA ligase</fullName>
        <ecNumber evidence="1">6.1.1.17</ecNumber>
    </recommendedName>
    <alternativeName>
        <fullName evidence="1">Glutamyl-tRNA synthetase</fullName>
        <shortName evidence="1">GluRS</shortName>
    </alternativeName>
</protein>